<reference key="1">
    <citation type="online journal article" date="1997" name="Plant Gene Register">
        <title>Cloning and sequencing of the metallothionein-like cDNA from Festuca rubra cv. Merlin.</title>
        <authorList>
            <person name="Ma M."/>
            <person name="Tsang W.-K."/>
            <person name="Lau P.-S."/>
            <person name="Wong Y.-S."/>
        </authorList>
        <locator>PGR97-098</locator>
    </citation>
    <scope>NUCLEOTIDE SEQUENCE [MRNA]</scope>
    <source>
        <strain>cv. Merlin</strain>
        <tissue>Shoot</tissue>
    </source>
</reference>
<organism>
    <name type="scientific">Festuca rubra</name>
    <name type="common">Red fescue</name>
    <dbReference type="NCBI Taxonomy" id="52153"/>
    <lineage>
        <taxon>Eukaryota</taxon>
        <taxon>Viridiplantae</taxon>
        <taxon>Streptophyta</taxon>
        <taxon>Embryophyta</taxon>
        <taxon>Tracheophyta</taxon>
        <taxon>Spermatophyta</taxon>
        <taxon>Magnoliopsida</taxon>
        <taxon>Liliopsida</taxon>
        <taxon>Poales</taxon>
        <taxon>Poaceae</taxon>
        <taxon>BOP clade</taxon>
        <taxon>Pooideae</taxon>
        <taxon>Poodae</taxon>
        <taxon>Poeae</taxon>
        <taxon>Poeae Chloroplast Group 2 (Poeae type)</taxon>
        <taxon>Loliodinae</taxon>
        <taxon>Loliinae</taxon>
        <taxon>Festuca</taxon>
    </lineage>
</organism>
<protein>
    <recommendedName>
        <fullName>Metallothionein-like protein 1</fullName>
        <shortName>MT-1</shortName>
    </recommendedName>
</protein>
<comment type="function">
    <text>Metallothioneins have a high content of cysteine residues that bind various heavy metals.</text>
</comment>
<comment type="similarity">
    <text evidence="1">Belongs to the metallothionein superfamily. Type 15 family.</text>
</comment>
<proteinExistence type="inferred from homology"/>
<feature type="chain" id="PRO_0000197376" description="Metallothionein-like protein 1">
    <location>
        <begin position="1"/>
        <end position="70"/>
    </location>
</feature>
<evidence type="ECO:0000305" key="1"/>
<sequence length="70" mass="7096">MSCSCGSSCGCGSNCKCGKMYPDLDEQASTTTQAVVVVGVAHENKAGQFEMASGEGCKCGANCKCDPCNC</sequence>
<keyword id="KW-0479">Metal-binding</keyword>
<keyword id="KW-0480">Metal-thiolate cluster</keyword>
<gene>
    <name type="primary">MT1</name>
</gene>
<dbReference type="EMBL" id="U96646">
    <property type="protein sequence ID" value="AAB70464.1"/>
    <property type="molecule type" value="mRNA"/>
</dbReference>
<dbReference type="GO" id="GO:0046872">
    <property type="term" value="F:metal ion binding"/>
    <property type="evidence" value="ECO:0007669"/>
    <property type="project" value="UniProtKB-KW"/>
</dbReference>
<dbReference type="InterPro" id="IPR000347">
    <property type="entry name" value="Metalthion_15p"/>
</dbReference>
<dbReference type="PANTHER" id="PTHR33543:SF7">
    <property type="entry name" value="METALLOTHIONEIN-LIKE PROTEIN 1"/>
    <property type="match status" value="1"/>
</dbReference>
<dbReference type="PANTHER" id="PTHR33543">
    <property type="entry name" value="METALLOTHIONEIN-LIKE PROTEIN 2A"/>
    <property type="match status" value="1"/>
</dbReference>
<dbReference type="Pfam" id="PF01439">
    <property type="entry name" value="Metallothio_2"/>
    <property type="match status" value="1"/>
</dbReference>
<accession>O24528</accession>
<name>MT1_FESRU</name>